<sequence length="395" mass="43841">MSQLDLGTQSLELERFPPQENSNTLQAWEAADEYLLQNIDLSQIDGRPVLVFNDQFGTLACALHAYRPFSSSDSYMSQLATAHNLRLNHLDESAVTLLSSVDDLPEAPKLVVIKIPKALALLEHQLRALRRVVAPDTVIIAGAKSRDVHNSTLQLFEKILGPTKTTLAWKKARLIHCEVADIPLADAPETIDWPLPNTDYIIHNHANVFSRNNLDIGARFFMEILPYDVTGKIADLGCGNGVVGLIALEQNPLAEMLFVDESYMAVASSELNITVNRPQDLSRCEFMVSHGLAGVERESLQLVLCNPPFHQQHAVSDHVAWQMFCDAKRCLKAGGELMIVGNRHLDYFHKLKRLFGNCETLDSNQKFMVLKSVKQASSRSEGGGSGSLDMSYSDF</sequence>
<reference key="1">
    <citation type="journal article" date="2007" name="PLoS Genet.">
        <title>The complete genome sequence of Yersinia pseudotuberculosis IP31758, the causative agent of Far East scarlet-like fever.</title>
        <authorList>
            <person name="Eppinger M."/>
            <person name="Rosovitz M.J."/>
            <person name="Fricke W.F."/>
            <person name="Rasko D.A."/>
            <person name="Kokorina G."/>
            <person name="Fayolle C."/>
            <person name="Lindler L.E."/>
            <person name="Carniel E."/>
            <person name="Ravel J."/>
        </authorList>
    </citation>
    <scope>NUCLEOTIDE SEQUENCE [LARGE SCALE GENOMIC DNA]</scope>
    <source>
        <strain>IP 31758</strain>
    </source>
</reference>
<proteinExistence type="inferred from homology"/>
<accession>A7FE15</accession>
<protein>
    <recommendedName>
        <fullName evidence="1">Ribosomal RNA large subunit methyltransferase G</fullName>
        <ecNumber evidence="1">2.1.1.174</ecNumber>
    </recommendedName>
    <alternativeName>
        <fullName evidence="1">23S rRNA m2G1835 methyltransferase</fullName>
    </alternativeName>
    <alternativeName>
        <fullName evidence="1">rRNA (guanine-N(2)-)-methyltransferase RlmG</fullName>
    </alternativeName>
</protein>
<gene>
    <name evidence="1" type="primary">rlmG</name>
    <name type="ordered locus">YpsIP31758_0500</name>
</gene>
<comment type="function">
    <text evidence="1">Specifically methylates the guanine in position 1835 (m2G1835) of 23S rRNA.</text>
</comment>
<comment type="catalytic activity">
    <reaction evidence="1">
        <text>guanosine(1835) in 23S rRNA + S-adenosyl-L-methionine = N(2)-methylguanosine(1835) in 23S rRNA + S-adenosyl-L-homocysteine + H(+)</text>
        <dbReference type="Rhea" id="RHEA:42744"/>
        <dbReference type="Rhea" id="RHEA-COMP:10217"/>
        <dbReference type="Rhea" id="RHEA-COMP:10218"/>
        <dbReference type="ChEBI" id="CHEBI:15378"/>
        <dbReference type="ChEBI" id="CHEBI:57856"/>
        <dbReference type="ChEBI" id="CHEBI:59789"/>
        <dbReference type="ChEBI" id="CHEBI:74269"/>
        <dbReference type="ChEBI" id="CHEBI:74481"/>
        <dbReference type="EC" id="2.1.1.174"/>
    </reaction>
</comment>
<comment type="subcellular location">
    <subcellularLocation>
        <location evidence="1">Cytoplasm</location>
    </subcellularLocation>
</comment>
<comment type="similarity">
    <text evidence="1">Belongs to the methyltransferase superfamily. RlmG family.</text>
</comment>
<feature type="chain" id="PRO_0000366546" description="Ribosomal RNA large subunit methyltransferase G">
    <location>
        <begin position="1"/>
        <end position="395"/>
    </location>
</feature>
<dbReference type="EC" id="2.1.1.174" evidence="1"/>
<dbReference type="EMBL" id="CP000720">
    <property type="protein sequence ID" value="ABS46716.1"/>
    <property type="molecule type" value="Genomic_DNA"/>
</dbReference>
<dbReference type="RefSeq" id="WP_002210402.1">
    <property type="nucleotide sequence ID" value="NC_009708.1"/>
</dbReference>
<dbReference type="SMR" id="A7FE15"/>
<dbReference type="GeneID" id="57974028"/>
<dbReference type="KEGG" id="ypi:YpsIP31758_0500"/>
<dbReference type="HOGENOM" id="CLU_040288_4_0_6"/>
<dbReference type="Proteomes" id="UP000002412">
    <property type="component" value="Chromosome"/>
</dbReference>
<dbReference type="GO" id="GO:0005737">
    <property type="term" value="C:cytoplasm"/>
    <property type="evidence" value="ECO:0007669"/>
    <property type="project" value="UniProtKB-SubCell"/>
</dbReference>
<dbReference type="GO" id="GO:0052916">
    <property type="term" value="F:23S rRNA (guanine(1835)-N(2))-methyltransferase activity"/>
    <property type="evidence" value="ECO:0007669"/>
    <property type="project" value="UniProtKB-EC"/>
</dbReference>
<dbReference type="GO" id="GO:0003676">
    <property type="term" value="F:nucleic acid binding"/>
    <property type="evidence" value="ECO:0007669"/>
    <property type="project" value="InterPro"/>
</dbReference>
<dbReference type="CDD" id="cd02440">
    <property type="entry name" value="AdoMet_MTases"/>
    <property type="match status" value="1"/>
</dbReference>
<dbReference type="Gene3D" id="3.40.50.150">
    <property type="entry name" value="Vaccinia Virus protein VP39"/>
    <property type="match status" value="2"/>
</dbReference>
<dbReference type="HAMAP" id="MF_01859">
    <property type="entry name" value="23SrRNA_methyltr_G"/>
    <property type="match status" value="1"/>
</dbReference>
<dbReference type="InterPro" id="IPR002052">
    <property type="entry name" value="DNA_methylase_N6_adenine_CS"/>
</dbReference>
<dbReference type="InterPro" id="IPR017237">
    <property type="entry name" value="rRNA_m2G-MeTrfase_RlmG"/>
</dbReference>
<dbReference type="InterPro" id="IPR046977">
    <property type="entry name" value="RsmC/RlmG"/>
</dbReference>
<dbReference type="InterPro" id="IPR029063">
    <property type="entry name" value="SAM-dependent_MTases_sf"/>
</dbReference>
<dbReference type="InterPro" id="IPR007848">
    <property type="entry name" value="Small_mtfrase_dom"/>
</dbReference>
<dbReference type="NCBIfam" id="NF011577">
    <property type="entry name" value="PRK15001.1"/>
    <property type="match status" value="1"/>
</dbReference>
<dbReference type="PANTHER" id="PTHR47816:SF5">
    <property type="entry name" value="RIBOSOMAL RNA LARGE SUBUNIT METHYLTRANSFERASE G"/>
    <property type="match status" value="1"/>
</dbReference>
<dbReference type="PANTHER" id="PTHR47816">
    <property type="entry name" value="RIBOSOMAL RNA SMALL SUBUNIT METHYLTRANSFERASE C"/>
    <property type="match status" value="1"/>
</dbReference>
<dbReference type="Pfam" id="PF05175">
    <property type="entry name" value="MTS"/>
    <property type="match status" value="1"/>
</dbReference>
<dbReference type="PIRSF" id="PIRSF037565">
    <property type="entry name" value="RRNA_m2G_Mtase_RsmD_prd"/>
    <property type="match status" value="1"/>
</dbReference>
<dbReference type="SUPFAM" id="SSF53335">
    <property type="entry name" value="S-adenosyl-L-methionine-dependent methyltransferases"/>
    <property type="match status" value="1"/>
</dbReference>
<organism>
    <name type="scientific">Yersinia pseudotuberculosis serotype O:1b (strain IP 31758)</name>
    <dbReference type="NCBI Taxonomy" id="349747"/>
    <lineage>
        <taxon>Bacteria</taxon>
        <taxon>Pseudomonadati</taxon>
        <taxon>Pseudomonadota</taxon>
        <taxon>Gammaproteobacteria</taxon>
        <taxon>Enterobacterales</taxon>
        <taxon>Yersiniaceae</taxon>
        <taxon>Yersinia</taxon>
    </lineage>
</organism>
<evidence type="ECO:0000255" key="1">
    <source>
        <dbReference type="HAMAP-Rule" id="MF_01859"/>
    </source>
</evidence>
<name>RLMG_YERP3</name>
<keyword id="KW-0963">Cytoplasm</keyword>
<keyword id="KW-0489">Methyltransferase</keyword>
<keyword id="KW-0698">rRNA processing</keyword>
<keyword id="KW-0949">S-adenosyl-L-methionine</keyword>
<keyword id="KW-0808">Transferase</keyword>